<proteinExistence type="inferred from homology"/>
<reference key="1">
    <citation type="submission" date="2009-02" db="EMBL/GenBank/DDBJ databases">
        <title>Genome sequence of Bacillus cereus 03BB102.</title>
        <authorList>
            <person name="Dodson R.J."/>
            <person name="Jackson P."/>
            <person name="Munk A.C."/>
            <person name="Brettin T."/>
            <person name="Bruce D."/>
            <person name="Detter C."/>
            <person name="Tapia R."/>
            <person name="Han C."/>
            <person name="Sutton G."/>
            <person name="Sims D."/>
        </authorList>
    </citation>
    <scope>NUCLEOTIDE SEQUENCE [LARGE SCALE GENOMIC DNA]</scope>
    <source>
        <strain>03BB102</strain>
    </source>
</reference>
<comment type="function">
    <text evidence="1">Part of the phosphoribosylformylglycinamidine synthase complex involved in the purines biosynthetic pathway. Catalyzes the ATP-dependent conversion of formylglycinamide ribonucleotide (FGAR) and glutamine to yield formylglycinamidine ribonucleotide (FGAM) and glutamate. The FGAM synthase complex is composed of three subunits. PurQ produces an ammonia molecule by converting glutamine to glutamate. PurL transfers the ammonia molecule to FGAR to form FGAM in an ATP-dependent manner. PurS interacts with PurQ and PurL and is thought to assist in the transfer of the ammonia molecule from PurQ to PurL.</text>
</comment>
<comment type="catalytic activity">
    <reaction evidence="1">
        <text>N(2)-formyl-N(1)-(5-phospho-beta-D-ribosyl)glycinamide + L-glutamine + ATP + H2O = 2-formamido-N(1)-(5-O-phospho-beta-D-ribosyl)acetamidine + L-glutamate + ADP + phosphate + H(+)</text>
        <dbReference type="Rhea" id="RHEA:17129"/>
        <dbReference type="ChEBI" id="CHEBI:15377"/>
        <dbReference type="ChEBI" id="CHEBI:15378"/>
        <dbReference type="ChEBI" id="CHEBI:29985"/>
        <dbReference type="ChEBI" id="CHEBI:30616"/>
        <dbReference type="ChEBI" id="CHEBI:43474"/>
        <dbReference type="ChEBI" id="CHEBI:58359"/>
        <dbReference type="ChEBI" id="CHEBI:147286"/>
        <dbReference type="ChEBI" id="CHEBI:147287"/>
        <dbReference type="ChEBI" id="CHEBI:456216"/>
        <dbReference type="EC" id="6.3.5.3"/>
    </reaction>
</comment>
<comment type="catalytic activity">
    <reaction evidence="1">
        <text>L-glutamine + H2O = L-glutamate + NH4(+)</text>
        <dbReference type="Rhea" id="RHEA:15889"/>
        <dbReference type="ChEBI" id="CHEBI:15377"/>
        <dbReference type="ChEBI" id="CHEBI:28938"/>
        <dbReference type="ChEBI" id="CHEBI:29985"/>
        <dbReference type="ChEBI" id="CHEBI:58359"/>
        <dbReference type="EC" id="3.5.1.2"/>
    </reaction>
</comment>
<comment type="pathway">
    <text evidence="1">Purine metabolism; IMP biosynthesis via de novo pathway; 5-amino-1-(5-phospho-D-ribosyl)imidazole from N(2)-formyl-N(1)-(5-phospho-D-ribosyl)glycinamide: step 1/2.</text>
</comment>
<comment type="subunit">
    <text evidence="1">Part of the FGAM synthase complex composed of 1 PurL, 1 PurQ and 2 PurS subunits.</text>
</comment>
<comment type="subcellular location">
    <subcellularLocation>
        <location evidence="1">Cytoplasm</location>
    </subcellularLocation>
</comment>
<name>PURQ_BACC3</name>
<keyword id="KW-0067">ATP-binding</keyword>
<keyword id="KW-0963">Cytoplasm</keyword>
<keyword id="KW-0315">Glutamine amidotransferase</keyword>
<keyword id="KW-0378">Hydrolase</keyword>
<keyword id="KW-0436">Ligase</keyword>
<keyword id="KW-0547">Nucleotide-binding</keyword>
<keyword id="KW-0658">Purine biosynthesis</keyword>
<feature type="chain" id="PRO_1000134912" description="Phosphoribosylformylglycinamidine synthase subunit PurQ">
    <location>
        <begin position="1"/>
        <end position="227"/>
    </location>
</feature>
<feature type="domain" description="Glutamine amidotransferase type-1" evidence="1">
    <location>
        <begin position="3"/>
        <end position="225"/>
    </location>
</feature>
<feature type="active site" description="Nucleophile" evidence="1">
    <location>
        <position position="86"/>
    </location>
</feature>
<feature type="active site" evidence="1">
    <location>
        <position position="194"/>
    </location>
</feature>
<feature type="active site" evidence="1">
    <location>
        <position position="196"/>
    </location>
</feature>
<accession>C1EV62</accession>
<organism>
    <name type="scientific">Bacillus cereus (strain 03BB102)</name>
    <dbReference type="NCBI Taxonomy" id="572264"/>
    <lineage>
        <taxon>Bacteria</taxon>
        <taxon>Bacillati</taxon>
        <taxon>Bacillota</taxon>
        <taxon>Bacilli</taxon>
        <taxon>Bacillales</taxon>
        <taxon>Bacillaceae</taxon>
        <taxon>Bacillus</taxon>
        <taxon>Bacillus cereus group</taxon>
    </lineage>
</organism>
<gene>
    <name evidence="1" type="primary">purQ</name>
    <name type="ordered locus">BCA_0367</name>
</gene>
<sequence length="227" mass="25339">MKFAVIVFPGSNCDVDMFHAIKDELGEEVDYVWHDTENLDGYDAILLPGGFSYGDYLRCGAISRFANAMKAVQKAAEQGKPILGVCNGFQILVESGLLPGALMRNENLKFMCRTVQLRVENNETMFTSQYEKDEVINIPIAHGEGNYYCDEETLKQLEENNQIAFRYVENPNGSVSDIAGIVNEKGNVLGMMPHPERAVDELLGGAEGLKVFQSILKQWRETYVVNA</sequence>
<protein>
    <recommendedName>
        <fullName evidence="1">Phosphoribosylformylglycinamidine synthase subunit PurQ</fullName>
        <shortName evidence="1">FGAM synthase</shortName>
        <ecNumber evidence="1">6.3.5.3</ecNumber>
    </recommendedName>
    <alternativeName>
        <fullName evidence="1">Formylglycinamide ribonucleotide amidotransferase subunit I</fullName>
        <shortName evidence="1">FGAR amidotransferase I</shortName>
        <shortName evidence="1">FGAR-AT I</shortName>
    </alternativeName>
    <alternativeName>
        <fullName evidence="1">Glutaminase PurQ</fullName>
        <ecNumber evidence="1">3.5.1.2</ecNumber>
    </alternativeName>
    <alternativeName>
        <fullName evidence="1">Phosphoribosylformylglycinamidine synthase subunit I</fullName>
    </alternativeName>
</protein>
<dbReference type="EC" id="6.3.5.3" evidence="1"/>
<dbReference type="EC" id="3.5.1.2" evidence="1"/>
<dbReference type="EMBL" id="CP001407">
    <property type="protein sequence ID" value="ACO30119.1"/>
    <property type="molecule type" value="Genomic_DNA"/>
</dbReference>
<dbReference type="RefSeq" id="WP_000666792.1">
    <property type="nucleotide sequence ID" value="NZ_CP009318.1"/>
</dbReference>
<dbReference type="SMR" id="C1EV62"/>
<dbReference type="KEGG" id="bcx:BCA_0367"/>
<dbReference type="PATRIC" id="fig|572264.18.peg.356"/>
<dbReference type="UniPathway" id="UPA00074">
    <property type="reaction ID" value="UER00128"/>
</dbReference>
<dbReference type="Proteomes" id="UP000002210">
    <property type="component" value="Chromosome"/>
</dbReference>
<dbReference type="GO" id="GO:0005737">
    <property type="term" value="C:cytoplasm"/>
    <property type="evidence" value="ECO:0007669"/>
    <property type="project" value="UniProtKB-SubCell"/>
</dbReference>
<dbReference type="GO" id="GO:0005524">
    <property type="term" value="F:ATP binding"/>
    <property type="evidence" value="ECO:0007669"/>
    <property type="project" value="UniProtKB-KW"/>
</dbReference>
<dbReference type="GO" id="GO:0004359">
    <property type="term" value="F:glutaminase activity"/>
    <property type="evidence" value="ECO:0007669"/>
    <property type="project" value="UniProtKB-EC"/>
</dbReference>
<dbReference type="GO" id="GO:0004642">
    <property type="term" value="F:phosphoribosylformylglycinamidine synthase activity"/>
    <property type="evidence" value="ECO:0007669"/>
    <property type="project" value="UniProtKB-UniRule"/>
</dbReference>
<dbReference type="GO" id="GO:0006189">
    <property type="term" value="P:'de novo' IMP biosynthetic process"/>
    <property type="evidence" value="ECO:0007669"/>
    <property type="project" value="UniProtKB-UniRule"/>
</dbReference>
<dbReference type="CDD" id="cd01740">
    <property type="entry name" value="GATase1_FGAR_AT"/>
    <property type="match status" value="1"/>
</dbReference>
<dbReference type="FunFam" id="3.40.50.880:FF:000019">
    <property type="entry name" value="Phosphoribosylformylglycinamidine synthase subunit PurQ"/>
    <property type="match status" value="1"/>
</dbReference>
<dbReference type="Gene3D" id="3.40.50.880">
    <property type="match status" value="1"/>
</dbReference>
<dbReference type="HAMAP" id="MF_00421">
    <property type="entry name" value="PurQ"/>
    <property type="match status" value="1"/>
</dbReference>
<dbReference type="InterPro" id="IPR029062">
    <property type="entry name" value="Class_I_gatase-like"/>
</dbReference>
<dbReference type="InterPro" id="IPR010075">
    <property type="entry name" value="PRibForGlyAmidine_synth_PurQ"/>
</dbReference>
<dbReference type="NCBIfam" id="TIGR01737">
    <property type="entry name" value="FGAM_synth_I"/>
    <property type="match status" value="1"/>
</dbReference>
<dbReference type="NCBIfam" id="NF002957">
    <property type="entry name" value="PRK03619.1"/>
    <property type="match status" value="1"/>
</dbReference>
<dbReference type="PANTHER" id="PTHR47552">
    <property type="entry name" value="PHOSPHORIBOSYLFORMYLGLYCINAMIDINE SYNTHASE SUBUNIT PURQ"/>
    <property type="match status" value="1"/>
</dbReference>
<dbReference type="PANTHER" id="PTHR47552:SF1">
    <property type="entry name" value="PHOSPHORIBOSYLFORMYLGLYCINAMIDINE SYNTHASE SUBUNIT PURQ"/>
    <property type="match status" value="1"/>
</dbReference>
<dbReference type="Pfam" id="PF13507">
    <property type="entry name" value="GATase_5"/>
    <property type="match status" value="1"/>
</dbReference>
<dbReference type="PIRSF" id="PIRSF001586">
    <property type="entry name" value="FGAM_synth_I"/>
    <property type="match status" value="1"/>
</dbReference>
<dbReference type="SMART" id="SM01211">
    <property type="entry name" value="GATase_5"/>
    <property type="match status" value="1"/>
</dbReference>
<dbReference type="SUPFAM" id="SSF52317">
    <property type="entry name" value="Class I glutamine amidotransferase-like"/>
    <property type="match status" value="1"/>
</dbReference>
<dbReference type="PROSITE" id="PS51273">
    <property type="entry name" value="GATASE_TYPE_1"/>
    <property type="match status" value="1"/>
</dbReference>
<evidence type="ECO:0000255" key="1">
    <source>
        <dbReference type="HAMAP-Rule" id="MF_00421"/>
    </source>
</evidence>